<protein>
    <recommendedName>
        <fullName evidence="1">Integration host factor subunit alpha</fullName>
        <shortName evidence="1">IHF-alpha</shortName>
    </recommendedName>
</protein>
<proteinExistence type="inferred from homology"/>
<feature type="chain" id="PRO_1000122148" description="Integration host factor subunit alpha">
    <location>
        <begin position="1"/>
        <end position="106"/>
    </location>
</feature>
<comment type="function">
    <text evidence="1">This protein is one of the two subunits of integration host factor, a specific DNA-binding protein that functions in genetic recombination as well as in transcriptional and translational control.</text>
</comment>
<comment type="subunit">
    <text evidence="1">Heterodimer of an alpha and a beta chain.</text>
</comment>
<comment type="similarity">
    <text evidence="1">Belongs to the bacterial histone-like protein family.</text>
</comment>
<organism>
    <name type="scientific">Methylobacterium radiotolerans (strain ATCC 27329 / DSM 1819 / JCM 2831 / NBRC 15690 / NCIMB 10815 / 0-1)</name>
    <dbReference type="NCBI Taxonomy" id="426355"/>
    <lineage>
        <taxon>Bacteria</taxon>
        <taxon>Pseudomonadati</taxon>
        <taxon>Pseudomonadota</taxon>
        <taxon>Alphaproteobacteria</taxon>
        <taxon>Hyphomicrobiales</taxon>
        <taxon>Methylobacteriaceae</taxon>
        <taxon>Methylobacterium</taxon>
    </lineage>
</organism>
<accession>B1LZ99</accession>
<dbReference type="EMBL" id="CP001001">
    <property type="protein sequence ID" value="ACB25941.1"/>
    <property type="molecule type" value="Genomic_DNA"/>
</dbReference>
<dbReference type="RefSeq" id="WP_012320898.1">
    <property type="nucleotide sequence ID" value="NC_010505.1"/>
</dbReference>
<dbReference type="SMR" id="B1LZ99"/>
<dbReference type="STRING" id="426355.Mrad2831_3967"/>
<dbReference type="GeneID" id="6140022"/>
<dbReference type="KEGG" id="mrd:Mrad2831_3967"/>
<dbReference type="eggNOG" id="COG0776">
    <property type="taxonomic scope" value="Bacteria"/>
</dbReference>
<dbReference type="HOGENOM" id="CLU_105066_1_1_5"/>
<dbReference type="OrthoDB" id="9797747at2"/>
<dbReference type="Proteomes" id="UP000006589">
    <property type="component" value="Chromosome"/>
</dbReference>
<dbReference type="GO" id="GO:0005829">
    <property type="term" value="C:cytosol"/>
    <property type="evidence" value="ECO:0007669"/>
    <property type="project" value="TreeGrafter"/>
</dbReference>
<dbReference type="GO" id="GO:0003677">
    <property type="term" value="F:DNA binding"/>
    <property type="evidence" value="ECO:0007669"/>
    <property type="project" value="UniProtKB-UniRule"/>
</dbReference>
<dbReference type="GO" id="GO:0030527">
    <property type="term" value="F:structural constituent of chromatin"/>
    <property type="evidence" value="ECO:0007669"/>
    <property type="project" value="InterPro"/>
</dbReference>
<dbReference type="GO" id="GO:0006310">
    <property type="term" value="P:DNA recombination"/>
    <property type="evidence" value="ECO:0007669"/>
    <property type="project" value="UniProtKB-UniRule"/>
</dbReference>
<dbReference type="GO" id="GO:0009893">
    <property type="term" value="P:positive regulation of metabolic process"/>
    <property type="evidence" value="ECO:0007669"/>
    <property type="project" value="UniProtKB-ARBA"/>
</dbReference>
<dbReference type="GO" id="GO:0006355">
    <property type="term" value="P:regulation of DNA-templated transcription"/>
    <property type="evidence" value="ECO:0007669"/>
    <property type="project" value="UniProtKB-UniRule"/>
</dbReference>
<dbReference type="GO" id="GO:0006417">
    <property type="term" value="P:regulation of translation"/>
    <property type="evidence" value="ECO:0007669"/>
    <property type="project" value="UniProtKB-UniRule"/>
</dbReference>
<dbReference type="CDD" id="cd13835">
    <property type="entry name" value="IHF_A"/>
    <property type="match status" value="1"/>
</dbReference>
<dbReference type="FunFam" id="4.10.520.10:FF:000010">
    <property type="entry name" value="Integration host factor subunit alpha"/>
    <property type="match status" value="1"/>
</dbReference>
<dbReference type="Gene3D" id="4.10.520.10">
    <property type="entry name" value="IHF-like DNA-binding proteins"/>
    <property type="match status" value="1"/>
</dbReference>
<dbReference type="HAMAP" id="MF_00380">
    <property type="entry name" value="IHF_alpha"/>
    <property type="match status" value="1"/>
</dbReference>
<dbReference type="InterPro" id="IPR000119">
    <property type="entry name" value="Hist_DNA-bd"/>
</dbReference>
<dbReference type="InterPro" id="IPR020816">
    <property type="entry name" value="Histone-like_DNA-bd_CS"/>
</dbReference>
<dbReference type="InterPro" id="IPR010992">
    <property type="entry name" value="IHF-like_DNA-bd_dom_sf"/>
</dbReference>
<dbReference type="InterPro" id="IPR005684">
    <property type="entry name" value="IHF_alpha"/>
</dbReference>
<dbReference type="NCBIfam" id="NF001401">
    <property type="entry name" value="PRK00285.1"/>
    <property type="match status" value="1"/>
</dbReference>
<dbReference type="PANTHER" id="PTHR33175">
    <property type="entry name" value="DNA-BINDING PROTEIN HU"/>
    <property type="match status" value="1"/>
</dbReference>
<dbReference type="PANTHER" id="PTHR33175:SF2">
    <property type="entry name" value="INTEGRATION HOST FACTOR SUBUNIT ALPHA"/>
    <property type="match status" value="1"/>
</dbReference>
<dbReference type="Pfam" id="PF00216">
    <property type="entry name" value="Bac_DNA_binding"/>
    <property type="match status" value="1"/>
</dbReference>
<dbReference type="PRINTS" id="PR01727">
    <property type="entry name" value="DNABINDINGHU"/>
</dbReference>
<dbReference type="SMART" id="SM00411">
    <property type="entry name" value="BHL"/>
    <property type="match status" value="1"/>
</dbReference>
<dbReference type="SUPFAM" id="SSF47729">
    <property type="entry name" value="IHF-like DNA-binding proteins"/>
    <property type="match status" value="1"/>
</dbReference>
<dbReference type="PROSITE" id="PS00045">
    <property type="entry name" value="HISTONE_LIKE"/>
    <property type="match status" value="1"/>
</dbReference>
<reference key="1">
    <citation type="submission" date="2008-03" db="EMBL/GenBank/DDBJ databases">
        <title>Complete sequence of chromosome of Methylobacterium radiotolerans JCM 2831.</title>
        <authorList>
            <consortium name="US DOE Joint Genome Institute"/>
            <person name="Copeland A."/>
            <person name="Lucas S."/>
            <person name="Lapidus A."/>
            <person name="Glavina del Rio T."/>
            <person name="Dalin E."/>
            <person name="Tice H."/>
            <person name="Bruce D."/>
            <person name="Goodwin L."/>
            <person name="Pitluck S."/>
            <person name="Kiss H."/>
            <person name="Brettin T."/>
            <person name="Detter J.C."/>
            <person name="Han C."/>
            <person name="Kuske C.R."/>
            <person name="Schmutz J."/>
            <person name="Larimer F."/>
            <person name="Land M."/>
            <person name="Hauser L."/>
            <person name="Kyrpides N."/>
            <person name="Mikhailova N."/>
            <person name="Marx C.J."/>
            <person name="Richardson P."/>
        </authorList>
    </citation>
    <scope>NUCLEOTIDE SEQUENCE [LARGE SCALE GENOMIC DNA]</scope>
    <source>
        <strain>ATCC 27329 / DSM 1819 / JCM 2831 / NBRC 15690 / NCIMB 10815 / 0-1</strain>
    </source>
</reference>
<gene>
    <name evidence="1" type="primary">ihfA</name>
    <name evidence="1" type="synonym">himA</name>
    <name type="ordered locus">Mrad2831_3967</name>
</gene>
<sequence>MAGKTVTRADLSEAVYHQVGLSRTESAALVETVLSEICSCLASGETVKLSSFGSFVVRSKGKRVGRNPKTGVEVAIEPRQVMVFKPSNVLKAKINGLNGAGEHDDD</sequence>
<keyword id="KW-0233">DNA recombination</keyword>
<keyword id="KW-0238">DNA-binding</keyword>
<keyword id="KW-0804">Transcription</keyword>
<keyword id="KW-0805">Transcription regulation</keyword>
<keyword id="KW-0810">Translation regulation</keyword>
<name>IHFA_METRJ</name>
<evidence type="ECO:0000255" key="1">
    <source>
        <dbReference type="HAMAP-Rule" id="MF_00380"/>
    </source>
</evidence>